<reference key="1">
    <citation type="journal article" date="2009" name="J. Bacteriol.">
        <title>Complete genome sequence and comparative genome analysis of enteropathogenic Escherichia coli O127:H6 strain E2348/69.</title>
        <authorList>
            <person name="Iguchi A."/>
            <person name="Thomson N.R."/>
            <person name="Ogura Y."/>
            <person name="Saunders D."/>
            <person name="Ooka T."/>
            <person name="Henderson I.R."/>
            <person name="Harris D."/>
            <person name="Asadulghani M."/>
            <person name="Kurokawa K."/>
            <person name="Dean P."/>
            <person name="Kenny B."/>
            <person name="Quail M.A."/>
            <person name="Thurston S."/>
            <person name="Dougan G."/>
            <person name="Hayashi T."/>
            <person name="Parkhill J."/>
            <person name="Frankel G."/>
        </authorList>
    </citation>
    <scope>NUCLEOTIDE SEQUENCE [LARGE SCALE GENOMIC DNA]</scope>
    <source>
        <strain>E2348/69 / EPEC</strain>
    </source>
</reference>
<organism>
    <name type="scientific">Escherichia coli O127:H6 (strain E2348/69 / EPEC)</name>
    <dbReference type="NCBI Taxonomy" id="574521"/>
    <lineage>
        <taxon>Bacteria</taxon>
        <taxon>Pseudomonadati</taxon>
        <taxon>Pseudomonadota</taxon>
        <taxon>Gammaproteobacteria</taxon>
        <taxon>Enterobacterales</taxon>
        <taxon>Enterobacteriaceae</taxon>
        <taxon>Escherichia</taxon>
    </lineage>
</organism>
<feature type="chain" id="PRO_1000124266" description="Cardiolipin synthase A">
    <location>
        <begin position="1"/>
        <end position="486"/>
    </location>
</feature>
<feature type="transmembrane region" description="Helical" evidence="1">
    <location>
        <begin position="3"/>
        <end position="23"/>
    </location>
</feature>
<feature type="transmembrane region" description="Helical" evidence="1">
    <location>
        <begin position="38"/>
        <end position="58"/>
    </location>
</feature>
<feature type="domain" description="PLD phosphodiesterase 1" evidence="1">
    <location>
        <begin position="219"/>
        <end position="246"/>
    </location>
</feature>
<feature type="domain" description="PLD phosphodiesterase 2" evidence="1">
    <location>
        <begin position="399"/>
        <end position="426"/>
    </location>
</feature>
<feature type="active site" evidence="1">
    <location>
        <position position="224"/>
    </location>
</feature>
<feature type="active site" evidence="1">
    <location>
        <position position="226"/>
    </location>
</feature>
<feature type="active site" evidence="1">
    <location>
        <position position="231"/>
    </location>
</feature>
<feature type="active site" evidence="1">
    <location>
        <position position="404"/>
    </location>
</feature>
<feature type="active site" evidence="1">
    <location>
        <position position="406"/>
    </location>
</feature>
<feature type="active site" evidence="1">
    <location>
        <position position="411"/>
    </location>
</feature>
<protein>
    <recommendedName>
        <fullName evidence="1">Cardiolipin synthase A</fullName>
        <shortName evidence="1">CL synthase</shortName>
        <ecNumber evidence="1">2.7.8.-</ecNumber>
    </recommendedName>
</protein>
<dbReference type="EC" id="2.7.8.-" evidence="1"/>
<dbReference type="EMBL" id="FM180568">
    <property type="protein sequence ID" value="CAS08923.1"/>
    <property type="molecule type" value="Genomic_DNA"/>
</dbReference>
<dbReference type="RefSeq" id="WP_000214516.1">
    <property type="nucleotide sequence ID" value="NC_011601.1"/>
</dbReference>
<dbReference type="SMR" id="B7UQD9"/>
<dbReference type="GeneID" id="93775314"/>
<dbReference type="KEGG" id="ecg:E2348C_1375"/>
<dbReference type="HOGENOM" id="CLU_038053_1_0_6"/>
<dbReference type="Proteomes" id="UP000008205">
    <property type="component" value="Chromosome"/>
</dbReference>
<dbReference type="GO" id="GO:0005886">
    <property type="term" value="C:plasma membrane"/>
    <property type="evidence" value="ECO:0007669"/>
    <property type="project" value="UniProtKB-SubCell"/>
</dbReference>
<dbReference type="GO" id="GO:0008808">
    <property type="term" value="F:cardiolipin synthase activity"/>
    <property type="evidence" value="ECO:0007669"/>
    <property type="project" value="InterPro"/>
</dbReference>
<dbReference type="GO" id="GO:0032049">
    <property type="term" value="P:cardiolipin biosynthetic process"/>
    <property type="evidence" value="ECO:0007669"/>
    <property type="project" value="InterPro"/>
</dbReference>
<dbReference type="CDD" id="cd09152">
    <property type="entry name" value="PLDc_EcCLS_like_1"/>
    <property type="match status" value="1"/>
</dbReference>
<dbReference type="CDD" id="cd09158">
    <property type="entry name" value="PLDc_EcCLS_like_2"/>
    <property type="match status" value="1"/>
</dbReference>
<dbReference type="FunFam" id="3.30.870.10:FF:000002">
    <property type="entry name" value="Cardiolipin synthase A"/>
    <property type="match status" value="1"/>
</dbReference>
<dbReference type="FunFam" id="3.30.870.10:FF:000003">
    <property type="entry name" value="Cardiolipin synthase A"/>
    <property type="match status" value="1"/>
</dbReference>
<dbReference type="Gene3D" id="3.30.870.10">
    <property type="entry name" value="Endonuclease Chain A"/>
    <property type="match status" value="2"/>
</dbReference>
<dbReference type="HAMAP" id="MF_00190">
    <property type="entry name" value="Cardiolipin_synth_ClsA"/>
    <property type="match status" value="1"/>
</dbReference>
<dbReference type="InterPro" id="IPR022924">
    <property type="entry name" value="Cardiolipin_synthase"/>
</dbReference>
<dbReference type="InterPro" id="IPR030840">
    <property type="entry name" value="CL_synthase_A"/>
</dbReference>
<dbReference type="InterPro" id="IPR027379">
    <property type="entry name" value="CLS_N"/>
</dbReference>
<dbReference type="InterPro" id="IPR025202">
    <property type="entry name" value="PLD-like_dom"/>
</dbReference>
<dbReference type="InterPro" id="IPR001736">
    <property type="entry name" value="PLipase_D/transphosphatidylase"/>
</dbReference>
<dbReference type="NCBIfam" id="TIGR04265">
    <property type="entry name" value="bac_cardiolipin"/>
    <property type="match status" value="1"/>
</dbReference>
<dbReference type="PANTHER" id="PTHR21248">
    <property type="entry name" value="CARDIOLIPIN SYNTHASE"/>
    <property type="match status" value="1"/>
</dbReference>
<dbReference type="PANTHER" id="PTHR21248:SF22">
    <property type="entry name" value="PHOSPHOLIPASE D"/>
    <property type="match status" value="1"/>
</dbReference>
<dbReference type="Pfam" id="PF13091">
    <property type="entry name" value="PLDc_2"/>
    <property type="match status" value="2"/>
</dbReference>
<dbReference type="Pfam" id="PF13396">
    <property type="entry name" value="PLDc_N"/>
    <property type="match status" value="1"/>
</dbReference>
<dbReference type="SMART" id="SM00155">
    <property type="entry name" value="PLDc"/>
    <property type="match status" value="2"/>
</dbReference>
<dbReference type="SUPFAM" id="SSF56024">
    <property type="entry name" value="Phospholipase D/nuclease"/>
    <property type="match status" value="2"/>
</dbReference>
<dbReference type="PROSITE" id="PS50035">
    <property type="entry name" value="PLD"/>
    <property type="match status" value="2"/>
</dbReference>
<comment type="function">
    <text evidence="1">Catalyzes the reversible phosphatidyl group transfer from one phosphatidylglycerol molecule to another to form cardiolipin (CL) (diphosphatidylglycerol) and glycerol.</text>
</comment>
<comment type="catalytic activity">
    <reaction evidence="1">
        <text>2 a 1,2-diacyl-sn-glycero-3-phospho-(1'-sn-glycerol) = a cardiolipin + glycerol</text>
        <dbReference type="Rhea" id="RHEA:31451"/>
        <dbReference type="ChEBI" id="CHEBI:17754"/>
        <dbReference type="ChEBI" id="CHEBI:62237"/>
        <dbReference type="ChEBI" id="CHEBI:64716"/>
    </reaction>
</comment>
<comment type="subcellular location">
    <subcellularLocation>
        <location evidence="1">Cell inner membrane</location>
        <topology evidence="1">Multi-pass membrane protein</topology>
    </subcellularLocation>
</comment>
<comment type="similarity">
    <text evidence="1">Belongs to the phospholipase D family. Cardiolipin synthase subfamily. ClsA sub-subfamily.</text>
</comment>
<gene>
    <name evidence="1" type="primary">clsA</name>
    <name type="synonym">cls</name>
    <name type="ordered locus">E2348C_1375</name>
</gene>
<name>CLSA_ECO27</name>
<keyword id="KW-0997">Cell inner membrane</keyword>
<keyword id="KW-1003">Cell membrane</keyword>
<keyword id="KW-0444">Lipid biosynthesis</keyword>
<keyword id="KW-0443">Lipid metabolism</keyword>
<keyword id="KW-0472">Membrane</keyword>
<keyword id="KW-0594">Phospholipid biosynthesis</keyword>
<keyword id="KW-1208">Phospholipid metabolism</keyword>
<keyword id="KW-1185">Reference proteome</keyword>
<keyword id="KW-0677">Repeat</keyword>
<keyword id="KW-0808">Transferase</keyword>
<keyword id="KW-0812">Transmembrane</keyword>
<keyword id="KW-1133">Transmembrane helix</keyword>
<evidence type="ECO:0000255" key="1">
    <source>
        <dbReference type="HAMAP-Rule" id="MF_00190"/>
    </source>
</evidence>
<sequence length="486" mass="54822">MTTVYTLVSWLAILGYWLLIAGVTLRILMKRRAVPSAMAWLLIIYILPLVGIIAYLAVGELHLGKRRAERARAMWPSTAKWLNDLKACKHIFAEENSSVAAPLFKLCERRQGIAGVKGNQLQLMTESDDVMQALIRDIQLARHNIEMVFYIWQPGGMADQVAESLMAAARRGIHCRLMLDSAGSVAFFRSPWPELMRNAGIEVVEALKVNLMRVFLRRMDLRQHRKMIMIDNYIAYTGSMNMVDPRYFKQDAGVGQWIDLMARMEGPIATAMGIIYSCDWEIETGKRILPPPPDVNIMPFEQASGHTIHTIASGPGFPEDLIHQALLTAAYSAREYLIMTTPYFVPSDDLLHAICTAAQRGVDVSIILPRKNDSMLVGWASRAFFTELLAAGVKIYQFEGGLLHTKSVLVDGELSLVGTVNLDMRSLWLNFEITLAIDDKGFGADLAAVQDDYISRSRLLDARLWLKRPLWQRVAERLFYFFSPLL</sequence>
<proteinExistence type="inferred from homology"/>
<accession>B7UQD9</accession>